<feature type="chain" id="PRO_0000183719" description="Probable cytochrome c oxidase subunit 2">
    <location>
        <begin position="1"/>
        <end position="315"/>
    </location>
</feature>
<feature type="transmembrane region" description="Helical" evidence="2">
    <location>
        <begin position="54"/>
        <end position="74"/>
    </location>
</feature>
<feature type="transmembrane region" description="Helical" evidence="2">
    <location>
        <begin position="96"/>
        <end position="116"/>
    </location>
</feature>
<feature type="transmembrane region" description="Helical" evidence="2">
    <location>
        <begin position="133"/>
        <end position="153"/>
    </location>
</feature>
<feature type="binding site" evidence="2">
    <location>
        <position position="235"/>
    </location>
    <ligand>
        <name>Cu cation</name>
        <dbReference type="ChEBI" id="CHEBI:23378"/>
        <label>A</label>
    </ligand>
</feature>
<feature type="binding site" evidence="2">
    <location>
        <position position="270"/>
    </location>
    <ligand>
        <name>Cu cation</name>
        <dbReference type="ChEBI" id="CHEBI:23378"/>
        <label>A</label>
    </ligand>
</feature>
<feature type="binding site" evidence="2">
    <location>
        <position position="274"/>
    </location>
    <ligand>
        <name>Cu cation</name>
        <dbReference type="ChEBI" id="CHEBI:23378"/>
        <label>A</label>
    </ligand>
</feature>
<feature type="binding site" evidence="2">
    <location>
        <position position="278"/>
    </location>
    <ligand>
        <name>Cu cation</name>
        <dbReference type="ChEBI" id="CHEBI:23378"/>
        <label>A</label>
    </ligand>
</feature>
<comment type="function">
    <text evidence="1">Subunits I and II form the functional core of the enzyme complex. Electrons originating in cytochrome c are transferred via heme a and Cu(A) to the binuclear center formed by heme a3 and Cu(B) (By similarity).</text>
</comment>
<comment type="catalytic activity">
    <reaction>
        <text>4 Fe(II)-[cytochrome c] + O2 + 8 H(+)(in) = 4 Fe(III)-[cytochrome c] + 2 H2O + 4 H(+)(out)</text>
        <dbReference type="Rhea" id="RHEA:11436"/>
        <dbReference type="Rhea" id="RHEA-COMP:10350"/>
        <dbReference type="Rhea" id="RHEA-COMP:14399"/>
        <dbReference type="ChEBI" id="CHEBI:15377"/>
        <dbReference type="ChEBI" id="CHEBI:15378"/>
        <dbReference type="ChEBI" id="CHEBI:15379"/>
        <dbReference type="ChEBI" id="CHEBI:29033"/>
        <dbReference type="ChEBI" id="CHEBI:29034"/>
        <dbReference type="EC" id="7.1.1.9"/>
    </reaction>
</comment>
<comment type="cofactor">
    <cofactor evidence="1">
        <name>Cu cation</name>
        <dbReference type="ChEBI" id="CHEBI:23378"/>
    </cofactor>
    <text evidence="1">Binds a copper A center.</text>
</comment>
<comment type="cofactor">
    <cofactor evidence="1">
        <name>heme</name>
        <dbReference type="ChEBI" id="CHEBI:30413"/>
    </cofactor>
</comment>
<comment type="subcellular location">
    <subcellularLocation>
        <location evidence="3">Cell membrane</location>
        <topology evidence="3">Multi-pass membrane protein</topology>
    </subcellularLocation>
</comment>
<comment type="similarity">
    <text evidence="3">Belongs to the cytochrome c oxidase subunit 2 family.</text>
</comment>
<accession>Q92I65</accession>
<protein>
    <recommendedName>
        <fullName>Probable cytochrome c oxidase subunit 2</fullName>
        <ecNumber>7.1.1.9</ecNumber>
    </recommendedName>
    <alternativeName>
        <fullName>Cytochrome aa3 subunit 2</fullName>
    </alternativeName>
    <alternativeName>
        <fullName>Cytochrome c oxidase polypeptide II</fullName>
    </alternativeName>
</protein>
<dbReference type="EC" id="7.1.1.9"/>
<dbReference type="EMBL" id="AE006914">
    <property type="protein sequence ID" value="AAL03093.1"/>
    <property type="molecule type" value="Genomic_DNA"/>
</dbReference>
<dbReference type="PIR" id="C97769">
    <property type="entry name" value="C97769"/>
</dbReference>
<dbReference type="RefSeq" id="WP_010977191.1">
    <property type="nucleotide sequence ID" value="NC_003103.1"/>
</dbReference>
<dbReference type="SMR" id="Q92I65"/>
<dbReference type="GeneID" id="927663"/>
<dbReference type="KEGG" id="rco:RC0555"/>
<dbReference type="PATRIC" id="fig|272944.4.peg.634"/>
<dbReference type="HOGENOM" id="CLU_036876_2_0_5"/>
<dbReference type="Proteomes" id="UP000000816">
    <property type="component" value="Chromosome"/>
</dbReference>
<dbReference type="GO" id="GO:0005886">
    <property type="term" value="C:plasma membrane"/>
    <property type="evidence" value="ECO:0007669"/>
    <property type="project" value="UniProtKB-SubCell"/>
</dbReference>
<dbReference type="GO" id="GO:0005507">
    <property type="term" value="F:copper ion binding"/>
    <property type="evidence" value="ECO:0007669"/>
    <property type="project" value="InterPro"/>
</dbReference>
<dbReference type="GO" id="GO:0004129">
    <property type="term" value="F:cytochrome-c oxidase activity"/>
    <property type="evidence" value="ECO:0007669"/>
    <property type="project" value="UniProtKB-EC"/>
</dbReference>
<dbReference type="GO" id="GO:0042773">
    <property type="term" value="P:ATP synthesis coupled electron transport"/>
    <property type="evidence" value="ECO:0007669"/>
    <property type="project" value="TreeGrafter"/>
</dbReference>
<dbReference type="CDD" id="cd13912">
    <property type="entry name" value="CcO_II_C"/>
    <property type="match status" value="1"/>
</dbReference>
<dbReference type="FunFam" id="2.60.40.420:FF:000001">
    <property type="entry name" value="Cytochrome c oxidase subunit 2"/>
    <property type="match status" value="1"/>
</dbReference>
<dbReference type="Gene3D" id="1.10.287.90">
    <property type="match status" value="1"/>
</dbReference>
<dbReference type="Gene3D" id="2.60.40.420">
    <property type="entry name" value="Cupredoxins - blue copper proteins"/>
    <property type="match status" value="1"/>
</dbReference>
<dbReference type="InterPro" id="IPR045187">
    <property type="entry name" value="CcO_II"/>
</dbReference>
<dbReference type="InterPro" id="IPR002429">
    <property type="entry name" value="CcO_II-like_C"/>
</dbReference>
<dbReference type="InterPro" id="IPR034210">
    <property type="entry name" value="CcO_II_C"/>
</dbReference>
<dbReference type="InterPro" id="IPR001505">
    <property type="entry name" value="Copper_CuA"/>
</dbReference>
<dbReference type="InterPro" id="IPR008972">
    <property type="entry name" value="Cupredoxin"/>
</dbReference>
<dbReference type="InterPro" id="IPR014222">
    <property type="entry name" value="Cyt_c_oxidase_su2"/>
</dbReference>
<dbReference type="InterPro" id="IPR011759">
    <property type="entry name" value="Cyt_c_oxidase_su2_TM_dom"/>
</dbReference>
<dbReference type="InterPro" id="IPR036257">
    <property type="entry name" value="Cyt_c_oxidase_su2_TM_sf"/>
</dbReference>
<dbReference type="InterPro" id="IPR005728">
    <property type="entry name" value="RPE1"/>
</dbReference>
<dbReference type="NCBIfam" id="TIGR02866">
    <property type="entry name" value="CoxB"/>
    <property type="match status" value="1"/>
</dbReference>
<dbReference type="NCBIfam" id="TIGR01045">
    <property type="entry name" value="RPE1"/>
    <property type="match status" value="1"/>
</dbReference>
<dbReference type="PANTHER" id="PTHR22888:SF9">
    <property type="entry name" value="CYTOCHROME C OXIDASE SUBUNIT 2"/>
    <property type="match status" value="1"/>
</dbReference>
<dbReference type="PANTHER" id="PTHR22888">
    <property type="entry name" value="CYTOCHROME C OXIDASE, SUBUNIT II"/>
    <property type="match status" value="1"/>
</dbReference>
<dbReference type="Pfam" id="PF00116">
    <property type="entry name" value="COX2"/>
    <property type="match status" value="1"/>
</dbReference>
<dbReference type="Pfam" id="PF02790">
    <property type="entry name" value="COX2_TM"/>
    <property type="match status" value="1"/>
</dbReference>
<dbReference type="PRINTS" id="PR01166">
    <property type="entry name" value="CYCOXIDASEII"/>
</dbReference>
<dbReference type="SUPFAM" id="SSF49503">
    <property type="entry name" value="Cupredoxins"/>
    <property type="match status" value="1"/>
</dbReference>
<dbReference type="SUPFAM" id="SSF81464">
    <property type="entry name" value="Cytochrome c oxidase subunit II-like, transmembrane region"/>
    <property type="match status" value="1"/>
</dbReference>
<dbReference type="PROSITE" id="PS00078">
    <property type="entry name" value="COX2"/>
    <property type="match status" value="1"/>
</dbReference>
<dbReference type="PROSITE" id="PS50857">
    <property type="entry name" value="COX2_CUA"/>
    <property type="match status" value="1"/>
</dbReference>
<dbReference type="PROSITE" id="PS50999">
    <property type="entry name" value="COX2_TM"/>
    <property type="match status" value="1"/>
</dbReference>
<sequence length="315" mass="35744">MKNIIRHFSKPAYREEFKEDTSPRTAEYKSVSEDSSTGLTYTLPPKAKFGKMSIALICFLIVSCNCFASEPLPWQVTFQPPASPIMEELHHFHNFLLYISTAIVLFVAGLLGFVCIRFNAKNNPVPAKFSHNVLIEIIWTVIPIIILVIIAVPSFKILRHAEKIPKTDLTIKVVGYQWYWHYIYPDHDNLEFDSVMISDENLKPNHKRLLDVDNRIVIPENATVRFLITAGDVIHSFAVPSLGFKIDAVPGRINETWTRVAKKGVYYGQCSELCGIHHGFMPIAIEVVSKEDFDNWIASKNKTAMNGKKPKLVAN</sequence>
<name>COX2_RICCN</name>
<evidence type="ECO:0000250" key="1"/>
<evidence type="ECO:0000255" key="2"/>
<evidence type="ECO:0000305" key="3"/>
<keyword id="KW-1003">Cell membrane</keyword>
<keyword id="KW-0186">Copper</keyword>
<keyword id="KW-0249">Electron transport</keyword>
<keyword id="KW-0349">Heme</keyword>
<keyword id="KW-0408">Iron</keyword>
<keyword id="KW-0472">Membrane</keyword>
<keyword id="KW-0479">Metal-binding</keyword>
<keyword id="KW-0679">Respiratory chain</keyword>
<keyword id="KW-1278">Translocase</keyword>
<keyword id="KW-0812">Transmembrane</keyword>
<keyword id="KW-1133">Transmembrane helix</keyword>
<keyword id="KW-0813">Transport</keyword>
<gene>
    <name type="primary">ctaC</name>
    <name type="synonym">coxB</name>
    <name type="ordered locus">RC0555</name>
</gene>
<reference key="1">
    <citation type="journal article" date="2001" name="Science">
        <title>Mechanisms of evolution in Rickettsia conorii and R. prowazekii.</title>
        <authorList>
            <person name="Ogata H."/>
            <person name="Audic S."/>
            <person name="Renesto-Audiffren P."/>
            <person name="Fournier P.-E."/>
            <person name="Barbe V."/>
            <person name="Samson D."/>
            <person name="Roux V."/>
            <person name="Cossart P."/>
            <person name="Weissenbach J."/>
            <person name="Claverie J.-M."/>
            <person name="Raoult D."/>
        </authorList>
    </citation>
    <scope>NUCLEOTIDE SEQUENCE [LARGE SCALE GENOMIC DNA]</scope>
    <source>
        <strain>ATCC VR-613 / Malish 7</strain>
    </source>
</reference>
<proteinExistence type="inferred from homology"/>
<organism>
    <name type="scientific">Rickettsia conorii (strain ATCC VR-613 / Malish 7)</name>
    <dbReference type="NCBI Taxonomy" id="272944"/>
    <lineage>
        <taxon>Bacteria</taxon>
        <taxon>Pseudomonadati</taxon>
        <taxon>Pseudomonadota</taxon>
        <taxon>Alphaproteobacteria</taxon>
        <taxon>Rickettsiales</taxon>
        <taxon>Rickettsiaceae</taxon>
        <taxon>Rickettsieae</taxon>
        <taxon>Rickettsia</taxon>
        <taxon>spotted fever group</taxon>
    </lineage>
</organism>